<comment type="function">
    <text evidence="1">Catalyzes the last two sequential reactions in the de novo biosynthetic pathway for UDP-N-acetylglucosamine (UDP-GlcNAc). The C-terminal domain catalyzes the transfer of acetyl group from acetyl coenzyme A to glucosamine-1-phosphate (GlcN-1-P) to produce N-acetylglucosamine-1-phosphate (GlcNAc-1-P), which is converted into UDP-GlcNAc by the transfer of uridine 5-monophosphate (from uridine 5-triphosphate), a reaction catalyzed by the N-terminal domain.</text>
</comment>
<comment type="catalytic activity">
    <reaction evidence="1">
        <text>alpha-D-glucosamine 1-phosphate + acetyl-CoA = N-acetyl-alpha-D-glucosamine 1-phosphate + CoA + H(+)</text>
        <dbReference type="Rhea" id="RHEA:13725"/>
        <dbReference type="ChEBI" id="CHEBI:15378"/>
        <dbReference type="ChEBI" id="CHEBI:57287"/>
        <dbReference type="ChEBI" id="CHEBI:57288"/>
        <dbReference type="ChEBI" id="CHEBI:57776"/>
        <dbReference type="ChEBI" id="CHEBI:58516"/>
        <dbReference type="EC" id="2.3.1.157"/>
    </reaction>
</comment>
<comment type="catalytic activity">
    <reaction evidence="1">
        <text>N-acetyl-alpha-D-glucosamine 1-phosphate + UTP + H(+) = UDP-N-acetyl-alpha-D-glucosamine + diphosphate</text>
        <dbReference type="Rhea" id="RHEA:13509"/>
        <dbReference type="ChEBI" id="CHEBI:15378"/>
        <dbReference type="ChEBI" id="CHEBI:33019"/>
        <dbReference type="ChEBI" id="CHEBI:46398"/>
        <dbReference type="ChEBI" id="CHEBI:57705"/>
        <dbReference type="ChEBI" id="CHEBI:57776"/>
        <dbReference type="EC" id="2.7.7.23"/>
    </reaction>
</comment>
<comment type="cofactor">
    <cofactor evidence="1">
        <name>Mg(2+)</name>
        <dbReference type="ChEBI" id="CHEBI:18420"/>
    </cofactor>
    <text evidence="1">Binds 1 Mg(2+) ion per subunit.</text>
</comment>
<comment type="pathway">
    <text evidence="1">Nucleotide-sugar biosynthesis; UDP-N-acetyl-alpha-D-glucosamine biosynthesis; N-acetyl-alpha-D-glucosamine 1-phosphate from alpha-D-glucosamine 6-phosphate (route II): step 2/2.</text>
</comment>
<comment type="pathway">
    <text evidence="1">Nucleotide-sugar biosynthesis; UDP-N-acetyl-alpha-D-glucosamine biosynthesis; UDP-N-acetyl-alpha-D-glucosamine from N-acetyl-alpha-D-glucosamine 1-phosphate: step 1/1.</text>
</comment>
<comment type="pathway">
    <text evidence="1">Bacterial outer membrane biogenesis; LPS lipid A biosynthesis.</text>
</comment>
<comment type="subunit">
    <text evidence="1">Homotrimer.</text>
</comment>
<comment type="subcellular location">
    <subcellularLocation>
        <location evidence="1">Cytoplasm</location>
    </subcellularLocation>
</comment>
<comment type="similarity">
    <text evidence="1">In the N-terminal section; belongs to the N-acetylglucosamine-1-phosphate uridyltransferase family.</text>
</comment>
<comment type="similarity">
    <text evidence="1">In the C-terminal section; belongs to the transferase hexapeptide repeat family.</text>
</comment>
<protein>
    <recommendedName>
        <fullName evidence="1">Bifunctional protein GlmU</fullName>
    </recommendedName>
    <domain>
        <recommendedName>
            <fullName evidence="1">UDP-N-acetylglucosamine pyrophosphorylase</fullName>
            <ecNumber evidence="1">2.7.7.23</ecNumber>
        </recommendedName>
        <alternativeName>
            <fullName evidence="1">N-acetylglucosamine-1-phosphate uridyltransferase</fullName>
        </alternativeName>
    </domain>
    <domain>
        <recommendedName>
            <fullName evidence="1">Glucosamine-1-phosphate N-acetyltransferase</fullName>
            <ecNumber evidence="1">2.3.1.157</ecNumber>
        </recommendedName>
    </domain>
</protein>
<gene>
    <name evidence="1" type="primary">glmU</name>
    <name type="ordered locus">AM058</name>
</gene>
<proteinExistence type="inferred from homology"/>
<organism>
    <name type="scientific">Anaplasma marginale (strain St. Maries)</name>
    <dbReference type="NCBI Taxonomy" id="234826"/>
    <lineage>
        <taxon>Bacteria</taxon>
        <taxon>Pseudomonadati</taxon>
        <taxon>Pseudomonadota</taxon>
        <taxon>Alphaproteobacteria</taxon>
        <taxon>Rickettsiales</taxon>
        <taxon>Anaplasmataceae</taxon>
        <taxon>Anaplasma</taxon>
    </lineage>
</organism>
<keyword id="KW-0012">Acyltransferase</keyword>
<keyword id="KW-0133">Cell shape</keyword>
<keyword id="KW-0961">Cell wall biogenesis/degradation</keyword>
<keyword id="KW-0963">Cytoplasm</keyword>
<keyword id="KW-0460">Magnesium</keyword>
<keyword id="KW-0479">Metal-binding</keyword>
<keyword id="KW-0511">Multifunctional enzyme</keyword>
<keyword id="KW-0548">Nucleotidyltransferase</keyword>
<keyword id="KW-0573">Peptidoglycan synthesis</keyword>
<keyword id="KW-0677">Repeat</keyword>
<keyword id="KW-0808">Transferase</keyword>
<accession>Q5PBV0</accession>
<reference key="1">
    <citation type="journal article" date="2005" name="Proc. Natl. Acad. Sci. U.S.A.">
        <title>Complete genome sequencing of Anaplasma marginale reveals that the surface is skewed to two superfamilies of outer membrane proteins.</title>
        <authorList>
            <person name="Brayton K.A."/>
            <person name="Kappmeyer L.S."/>
            <person name="Herndon D.R."/>
            <person name="Dark M.J."/>
            <person name="Tibbals D.L."/>
            <person name="Palmer G.H."/>
            <person name="McGuire T.C."/>
            <person name="Knowles D.P. Jr."/>
        </authorList>
    </citation>
    <scope>NUCLEOTIDE SEQUENCE [LARGE SCALE GENOMIC DNA]</scope>
    <source>
        <strain>St. Maries</strain>
    </source>
</reference>
<name>GLMU_ANAMM</name>
<dbReference type="EC" id="2.7.7.23" evidence="1"/>
<dbReference type="EC" id="2.3.1.157" evidence="1"/>
<dbReference type="EMBL" id="CP000030">
    <property type="protein sequence ID" value="AAV86229.1"/>
    <property type="molecule type" value="Genomic_DNA"/>
</dbReference>
<dbReference type="RefSeq" id="WP_010266857.1">
    <property type="nucleotide sequence ID" value="NZ_AFMU01000001.1"/>
</dbReference>
<dbReference type="SMR" id="Q5PBV0"/>
<dbReference type="KEGG" id="ama:AM058"/>
<dbReference type="PATRIC" id="fig|320483.3.peg.42"/>
<dbReference type="HOGENOM" id="CLU_029499_15_2_5"/>
<dbReference type="UniPathway" id="UPA00113">
    <property type="reaction ID" value="UER00532"/>
</dbReference>
<dbReference type="UniPathway" id="UPA00113">
    <property type="reaction ID" value="UER00533"/>
</dbReference>
<dbReference type="UniPathway" id="UPA00973"/>
<dbReference type="GO" id="GO:0005737">
    <property type="term" value="C:cytoplasm"/>
    <property type="evidence" value="ECO:0007669"/>
    <property type="project" value="UniProtKB-SubCell"/>
</dbReference>
<dbReference type="GO" id="GO:0016020">
    <property type="term" value="C:membrane"/>
    <property type="evidence" value="ECO:0007669"/>
    <property type="project" value="GOC"/>
</dbReference>
<dbReference type="GO" id="GO:0019134">
    <property type="term" value="F:glucosamine-1-phosphate N-acetyltransferase activity"/>
    <property type="evidence" value="ECO:0007669"/>
    <property type="project" value="UniProtKB-UniRule"/>
</dbReference>
<dbReference type="GO" id="GO:0000287">
    <property type="term" value="F:magnesium ion binding"/>
    <property type="evidence" value="ECO:0007669"/>
    <property type="project" value="UniProtKB-UniRule"/>
</dbReference>
<dbReference type="GO" id="GO:0003977">
    <property type="term" value="F:UDP-N-acetylglucosamine diphosphorylase activity"/>
    <property type="evidence" value="ECO:0007669"/>
    <property type="project" value="UniProtKB-UniRule"/>
</dbReference>
<dbReference type="GO" id="GO:0000902">
    <property type="term" value="P:cell morphogenesis"/>
    <property type="evidence" value="ECO:0007669"/>
    <property type="project" value="UniProtKB-UniRule"/>
</dbReference>
<dbReference type="GO" id="GO:0071555">
    <property type="term" value="P:cell wall organization"/>
    <property type="evidence" value="ECO:0007669"/>
    <property type="project" value="UniProtKB-KW"/>
</dbReference>
<dbReference type="GO" id="GO:0009245">
    <property type="term" value="P:lipid A biosynthetic process"/>
    <property type="evidence" value="ECO:0007669"/>
    <property type="project" value="UniProtKB-UniRule"/>
</dbReference>
<dbReference type="GO" id="GO:0009252">
    <property type="term" value="P:peptidoglycan biosynthetic process"/>
    <property type="evidence" value="ECO:0007669"/>
    <property type="project" value="UniProtKB-UniRule"/>
</dbReference>
<dbReference type="GO" id="GO:0008360">
    <property type="term" value="P:regulation of cell shape"/>
    <property type="evidence" value="ECO:0007669"/>
    <property type="project" value="UniProtKB-KW"/>
</dbReference>
<dbReference type="GO" id="GO:0006048">
    <property type="term" value="P:UDP-N-acetylglucosamine biosynthetic process"/>
    <property type="evidence" value="ECO:0007669"/>
    <property type="project" value="UniProtKB-UniPathway"/>
</dbReference>
<dbReference type="CDD" id="cd03353">
    <property type="entry name" value="LbH_GlmU_C"/>
    <property type="match status" value="1"/>
</dbReference>
<dbReference type="Gene3D" id="2.160.10.10">
    <property type="entry name" value="Hexapeptide repeat proteins"/>
    <property type="match status" value="1"/>
</dbReference>
<dbReference type="Gene3D" id="3.90.550.10">
    <property type="entry name" value="Spore Coat Polysaccharide Biosynthesis Protein SpsA, Chain A"/>
    <property type="match status" value="1"/>
</dbReference>
<dbReference type="HAMAP" id="MF_01631">
    <property type="entry name" value="GlmU"/>
    <property type="match status" value="1"/>
</dbReference>
<dbReference type="InterPro" id="IPR005882">
    <property type="entry name" value="Bifunctional_GlmU"/>
</dbReference>
<dbReference type="InterPro" id="IPR050065">
    <property type="entry name" value="GlmU-like"/>
</dbReference>
<dbReference type="InterPro" id="IPR038009">
    <property type="entry name" value="GlmU_C_LbH"/>
</dbReference>
<dbReference type="InterPro" id="IPR001451">
    <property type="entry name" value="Hexapep"/>
</dbReference>
<dbReference type="InterPro" id="IPR018357">
    <property type="entry name" value="Hexapep_transf_CS"/>
</dbReference>
<dbReference type="InterPro" id="IPR025877">
    <property type="entry name" value="MobA-like_NTP_Trfase"/>
</dbReference>
<dbReference type="InterPro" id="IPR029044">
    <property type="entry name" value="Nucleotide-diphossugar_trans"/>
</dbReference>
<dbReference type="InterPro" id="IPR011004">
    <property type="entry name" value="Trimer_LpxA-like_sf"/>
</dbReference>
<dbReference type="PANTHER" id="PTHR43584:SF3">
    <property type="entry name" value="BIFUNCTIONAL PROTEIN GLMU"/>
    <property type="match status" value="1"/>
</dbReference>
<dbReference type="PANTHER" id="PTHR43584">
    <property type="entry name" value="NUCLEOTIDYL TRANSFERASE"/>
    <property type="match status" value="1"/>
</dbReference>
<dbReference type="Pfam" id="PF00132">
    <property type="entry name" value="Hexapep"/>
    <property type="match status" value="1"/>
</dbReference>
<dbReference type="Pfam" id="PF14602">
    <property type="entry name" value="Hexapep_2"/>
    <property type="match status" value="1"/>
</dbReference>
<dbReference type="Pfam" id="PF12804">
    <property type="entry name" value="NTP_transf_3"/>
    <property type="match status" value="1"/>
</dbReference>
<dbReference type="SUPFAM" id="SSF53448">
    <property type="entry name" value="Nucleotide-diphospho-sugar transferases"/>
    <property type="match status" value="1"/>
</dbReference>
<dbReference type="SUPFAM" id="SSF51161">
    <property type="entry name" value="Trimeric LpxA-like enzymes"/>
    <property type="match status" value="1"/>
</dbReference>
<dbReference type="PROSITE" id="PS00101">
    <property type="entry name" value="HEXAPEP_TRANSFERASES"/>
    <property type="match status" value="1"/>
</dbReference>
<evidence type="ECO:0000255" key="1">
    <source>
        <dbReference type="HAMAP-Rule" id="MF_01631"/>
    </source>
</evidence>
<feature type="chain" id="PRO_0000233723" description="Bifunctional protein GlmU">
    <location>
        <begin position="1"/>
        <end position="428"/>
    </location>
</feature>
<feature type="region of interest" description="Pyrophosphorylase" evidence="1">
    <location>
        <begin position="1"/>
        <end position="221"/>
    </location>
</feature>
<feature type="region of interest" description="Linker" evidence="1">
    <location>
        <begin position="222"/>
        <end position="242"/>
    </location>
</feature>
<feature type="region of interest" description="N-acetyltransferase" evidence="1">
    <location>
        <begin position="243"/>
        <end position="428"/>
    </location>
</feature>
<feature type="active site" description="Proton acceptor" evidence="1">
    <location>
        <position position="338"/>
    </location>
</feature>
<feature type="binding site" evidence="1">
    <location>
        <begin position="6"/>
        <end position="9"/>
    </location>
    <ligand>
        <name>UDP-N-acetyl-alpha-D-glucosamine</name>
        <dbReference type="ChEBI" id="CHEBI:57705"/>
    </ligand>
</feature>
<feature type="binding site" evidence="1">
    <location>
        <position position="20"/>
    </location>
    <ligand>
        <name>UDP-N-acetyl-alpha-D-glucosamine</name>
        <dbReference type="ChEBI" id="CHEBI:57705"/>
    </ligand>
</feature>
<feature type="binding site" evidence="1">
    <location>
        <position position="74"/>
    </location>
    <ligand>
        <name>UDP-N-acetyl-alpha-D-glucosamine</name>
        <dbReference type="ChEBI" id="CHEBI:57705"/>
    </ligand>
</feature>
<feature type="binding site" evidence="1">
    <location>
        <begin position="79"/>
        <end position="80"/>
    </location>
    <ligand>
        <name>UDP-N-acetyl-alpha-D-glucosamine</name>
        <dbReference type="ChEBI" id="CHEBI:57705"/>
    </ligand>
</feature>
<feature type="binding site" evidence="1">
    <location>
        <begin position="103"/>
        <end position="105"/>
    </location>
    <ligand>
        <name>UDP-N-acetyl-alpha-D-glucosamine</name>
        <dbReference type="ChEBI" id="CHEBI:57705"/>
    </ligand>
</feature>
<feature type="binding site" evidence="1">
    <location>
        <position position="105"/>
    </location>
    <ligand>
        <name>Mg(2+)</name>
        <dbReference type="ChEBI" id="CHEBI:18420"/>
    </ligand>
</feature>
<feature type="binding site" evidence="1">
    <location>
        <position position="140"/>
    </location>
    <ligand>
        <name>UDP-N-acetyl-alpha-D-glucosamine</name>
        <dbReference type="ChEBI" id="CHEBI:57705"/>
    </ligand>
</feature>
<feature type="binding site" evidence="1">
    <location>
        <position position="219"/>
    </location>
    <ligand>
        <name>Mg(2+)</name>
        <dbReference type="ChEBI" id="CHEBI:18420"/>
    </ligand>
</feature>
<feature type="binding site" evidence="1">
    <location>
        <position position="219"/>
    </location>
    <ligand>
        <name>UDP-N-acetyl-alpha-D-glucosamine</name>
        <dbReference type="ChEBI" id="CHEBI:57705"/>
    </ligand>
</feature>
<feature type="binding site" evidence="1">
    <location>
        <position position="308"/>
    </location>
    <ligand>
        <name>UDP-N-acetyl-alpha-D-glucosamine</name>
        <dbReference type="ChEBI" id="CHEBI:57705"/>
    </ligand>
</feature>
<feature type="binding site" evidence="1">
    <location>
        <position position="326"/>
    </location>
    <ligand>
        <name>UDP-N-acetyl-alpha-D-glucosamine</name>
        <dbReference type="ChEBI" id="CHEBI:57705"/>
    </ligand>
</feature>
<feature type="binding site" evidence="1">
    <location>
        <position position="341"/>
    </location>
    <ligand>
        <name>UDP-N-acetyl-alpha-D-glucosamine</name>
        <dbReference type="ChEBI" id="CHEBI:57705"/>
    </ligand>
</feature>
<feature type="binding site" evidence="1">
    <location>
        <position position="352"/>
    </location>
    <ligand>
        <name>UDP-N-acetyl-alpha-D-glucosamine</name>
        <dbReference type="ChEBI" id="CHEBI:57705"/>
    </ligand>
</feature>
<feature type="binding site" evidence="1">
    <location>
        <position position="355"/>
    </location>
    <ligand>
        <name>acetyl-CoA</name>
        <dbReference type="ChEBI" id="CHEBI:57288"/>
    </ligand>
</feature>
<feature type="binding site" evidence="1">
    <location>
        <begin position="361"/>
        <end position="362"/>
    </location>
    <ligand>
        <name>acetyl-CoA</name>
        <dbReference type="ChEBI" id="CHEBI:57288"/>
    </ligand>
</feature>
<feature type="binding site" evidence="1">
    <location>
        <position position="398"/>
    </location>
    <ligand>
        <name>acetyl-CoA</name>
        <dbReference type="ChEBI" id="CHEBI:57288"/>
    </ligand>
</feature>
<feature type="binding site" evidence="1">
    <location>
        <position position="415"/>
    </location>
    <ligand>
        <name>acetyl-CoA</name>
        <dbReference type="ChEBI" id="CHEBI:57288"/>
    </ligand>
</feature>
<sequence length="428" mass="45168">MDIVILAAGCGSRMCSTTPKILHKLGNAPIIKHVLQLADELRPKRAVIVTNAAVNGPVAALAGEHNLRLNTVLQGEIAGTGGAATSALQALKNPSEEIVLILYGDTPLLDKATVCHALDRLSSGAKIVLVAFKSENNQYGRIVLGSSGNVLEVSHGRDTNGLAVSGAIAGYRQVISGLLGGLSCRDGELYLTDIVQSAAEKNVEVGYVIADERKAMGINTRADLAIAESYFQCMKRASFLQSGVTLTSPDQVFFSIDTQIAQDVIVHPYVVFGAGVAVEPGAEILSYSHLEFCHIKKGAIVGPFARVRGNSTIDRGCVVGNFVEIKESSLGEMSKVKHLSYLGNSTIGKNTNVGAGTVICNYDGRNKQHSDIGNNCFVGANSTIVSPIKVGDNAAIAAGSVITEDLPPRSLGIARSRQTTKPEYKTRR</sequence>